<name>CYSA2_RHIME</name>
<feature type="chain" id="PRO_0000092288" description="Sulfate/thiosulfate import ATP-binding protein CysA 2">
    <location>
        <begin position="1"/>
        <end position="367"/>
    </location>
</feature>
<feature type="domain" description="ABC transporter" evidence="1">
    <location>
        <begin position="3"/>
        <end position="237"/>
    </location>
</feature>
<feature type="binding site" evidence="1">
    <location>
        <begin position="35"/>
        <end position="42"/>
    </location>
    <ligand>
        <name>ATP</name>
        <dbReference type="ChEBI" id="CHEBI:30616"/>
    </ligand>
</feature>
<reference key="1">
    <citation type="journal article" date="2001" name="Proc. Natl. Acad. Sci. U.S.A.">
        <title>The complete sequence of the 1,683-kb pSymB megaplasmid from the N2-fixing endosymbiont Sinorhizobium meliloti.</title>
        <authorList>
            <person name="Finan T.M."/>
            <person name="Weidner S."/>
            <person name="Wong K."/>
            <person name="Buhrmester J."/>
            <person name="Chain P."/>
            <person name="Vorhoelter F.J."/>
            <person name="Hernandez-Lucas I."/>
            <person name="Becker A."/>
            <person name="Cowie A."/>
            <person name="Gouzy J."/>
            <person name="Golding B."/>
            <person name="Puehler A."/>
        </authorList>
    </citation>
    <scope>NUCLEOTIDE SEQUENCE [LARGE SCALE GENOMIC DNA]</scope>
    <source>
        <strain>1021</strain>
    </source>
</reference>
<reference key="2">
    <citation type="journal article" date="2001" name="Science">
        <title>The composite genome of the legume symbiont Sinorhizobium meliloti.</title>
        <authorList>
            <person name="Galibert F."/>
            <person name="Finan T.M."/>
            <person name="Long S.R."/>
            <person name="Puehler A."/>
            <person name="Abola P."/>
            <person name="Ampe F."/>
            <person name="Barloy-Hubler F."/>
            <person name="Barnett M.J."/>
            <person name="Becker A."/>
            <person name="Boistard P."/>
            <person name="Bothe G."/>
            <person name="Boutry M."/>
            <person name="Bowser L."/>
            <person name="Buhrmester J."/>
            <person name="Cadieu E."/>
            <person name="Capela D."/>
            <person name="Chain P."/>
            <person name="Cowie A."/>
            <person name="Davis R.W."/>
            <person name="Dreano S."/>
            <person name="Federspiel N.A."/>
            <person name="Fisher R.F."/>
            <person name="Gloux S."/>
            <person name="Godrie T."/>
            <person name="Goffeau A."/>
            <person name="Golding B."/>
            <person name="Gouzy J."/>
            <person name="Gurjal M."/>
            <person name="Hernandez-Lucas I."/>
            <person name="Hong A."/>
            <person name="Huizar L."/>
            <person name="Hyman R.W."/>
            <person name="Jones T."/>
            <person name="Kahn D."/>
            <person name="Kahn M.L."/>
            <person name="Kalman S."/>
            <person name="Keating D.H."/>
            <person name="Kiss E."/>
            <person name="Komp C."/>
            <person name="Lelaure V."/>
            <person name="Masuy D."/>
            <person name="Palm C."/>
            <person name="Peck M.C."/>
            <person name="Pohl T.M."/>
            <person name="Portetelle D."/>
            <person name="Purnelle B."/>
            <person name="Ramsperger U."/>
            <person name="Surzycki R."/>
            <person name="Thebault P."/>
            <person name="Vandenbol M."/>
            <person name="Vorhoelter F.J."/>
            <person name="Weidner S."/>
            <person name="Wells D.H."/>
            <person name="Wong K."/>
            <person name="Yeh K.-C."/>
            <person name="Batut J."/>
        </authorList>
    </citation>
    <scope>NUCLEOTIDE SEQUENCE [LARGE SCALE GENOMIC DNA]</scope>
    <source>
        <strain>1021</strain>
    </source>
</reference>
<gene>
    <name evidence="1" type="primary">cysA2</name>
    <name type="ordered locus">RB0709</name>
    <name type="ORF">SMb21130</name>
</gene>
<sequence length="367" mass="40662">MEVRVQNIRKEFGRFPALEDVSLDIRSGELIALLGPSGSGKTTLLRLVAGLESPTEGTIFFGDEDASKKTVQQRNIGFVFQHYALFRHMTVLDNVAFGLKVRPAKRRPSAADIRRRAVDLLELVQLSGLERRYPAQLSGGQRQRVALARAMAVEPNVLLLDEPFGALDAQVRKELRRWLREIHDRTGHTTIFVTHDQEEALELADRVVVMSKGAIEQVGTPDEIYDHPVSPFVYGFIGQSNCLDVTLANGEIWHEDRPIGLRAGNEPDGAATLYFRPHDVELIDGCGGCLAGLVTASRRVAGTRHLELDLGRKHPPVEIELPPERAASTDHTRIAFRPTRWKLFRKGGQKEAPLIEAEAPVLAATGT</sequence>
<proteinExistence type="inferred from homology"/>
<accession>Q92VJ2</accession>
<evidence type="ECO:0000255" key="1">
    <source>
        <dbReference type="HAMAP-Rule" id="MF_01701"/>
    </source>
</evidence>
<protein>
    <recommendedName>
        <fullName evidence="1">Sulfate/thiosulfate import ATP-binding protein CysA 2</fullName>
        <ecNumber evidence="1">7.3.2.3</ecNumber>
    </recommendedName>
    <alternativeName>
        <fullName evidence="1">Sulfate-transporting ATPase 2</fullName>
    </alternativeName>
</protein>
<geneLocation type="plasmid">
    <name>pSymB</name>
    <name>megaplasmid 2</name>
</geneLocation>
<keyword id="KW-0067">ATP-binding</keyword>
<keyword id="KW-0997">Cell inner membrane</keyword>
<keyword id="KW-1003">Cell membrane</keyword>
<keyword id="KW-0472">Membrane</keyword>
<keyword id="KW-0547">Nucleotide-binding</keyword>
<keyword id="KW-0614">Plasmid</keyword>
<keyword id="KW-1185">Reference proteome</keyword>
<keyword id="KW-0764">Sulfate transport</keyword>
<keyword id="KW-1278">Translocase</keyword>
<keyword id="KW-0813">Transport</keyword>
<dbReference type="EC" id="7.3.2.3" evidence="1"/>
<dbReference type="EMBL" id="AL591985">
    <property type="protein sequence ID" value="CAC49109.1"/>
    <property type="molecule type" value="Genomic_DNA"/>
</dbReference>
<dbReference type="PIR" id="E95930">
    <property type="entry name" value="E95930"/>
</dbReference>
<dbReference type="RefSeq" id="NP_437249.1">
    <property type="nucleotide sequence ID" value="NC_003078.1"/>
</dbReference>
<dbReference type="RefSeq" id="WP_010975578.1">
    <property type="nucleotide sequence ID" value="NC_003078.1"/>
</dbReference>
<dbReference type="SMR" id="Q92VJ2"/>
<dbReference type="EnsemblBacteria" id="CAC49109">
    <property type="protein sequence ID" value="CAC49109"/>
    <property type="gene ID" value="SM_b21130"/>
</dbReference>
<dbReference type="KEGG" id="sme:SM_b21130"/>
<dbReference type="PATRIC" id="fig|266834.11.peg.5635"/>
<dbReference type="eggNOG" id="COG1118">
    <property type="taxonomic scope" value="Bacteria"/>
</dbReference>
<dbReference type="HOGENOM" id="CLU_000604_1_1_5"/>
<dbReference type="OrthoDB" id="9802264at2"/>
<dbReference type="PRO" id="PR:Q92VJ2"/>
<dbReference type="Proteomes" id="UP000001976">
    <property type="component" value="Plasmid pSymB"/>
</dbReference>
<dbReference type="GO" id="GO:0043190">
    <property type="term" value="C:ATP-binding cassette (ABC) transporter complex"/>
    <property type="evidence" value="ECO:0007669"/>
    <property type="project" value="InterPro"/>
</dbReference>
<dbReference type="GO" id="GO:0015419">
    <property type="term" value="F:ABC-type sulfate transporter activity"/>
    <property type="evidence" value="ECO:0007669"/>
    <property type="project" value="InterPro"/>
</dbReference>
<dbReference type="GO" id="GO:0102025">
    <property type="term" value="F:ABC-type thiosulfate transporter activity"/>
    <property type="evidence" value="ECO:0007669"/>
    <property type="project" value="RHEA"/>
</dbReference>
<dbReference type="GO" id="GO:0005524">
    <property type="term" value="F:ATP binding"/>
    <property type="evidence" value="ECO:0007669"/>
    <property type="project" value="UniProtKB-KW"/>
</dbReference>
<dbReference type="GO" id="GO:0016887">
    <property type="term" value="F:ATP hydrolysis activity"/>
    <property type="evidence" value="ECO:0007669"/>
    <property type="project" value="InterPro"/>
</dbReference>
<dbReference type="CDD" id="cd03296">
    <property type="entry name" value="ABC_CysA_sulfate_importer"/>
    <property type="match status" value="1"/>
</dbReference>
<dbReference type="FunFam" id="3.40.50.300:FF:000227">
    <property type="entry name" value="Sulfate/thiosulfate import ATP-binding protein CysA"/>
    <property type="match status" value="1"/>
</dbReference>
<dbReference type="Gene3D" id="3.40.50.300">
    <property type="entry name" value="P-loop containing nucleotide triphosphate hydrolases"/>
    <property type="match status" value="1"/>
</dbReference>
<dbReference type="InterPro" id="IPR003593">
    <property type="entry name" value="AAA+_ATPase"/>
</dbReference>
<dbReference type="InterPro" id="IPR050093">
    <property type="entry name" value="ABC_SmlMolc_Importer"/>
</dbReference>
<dbReference type="InterPro" id="IPR003439">
    <property type="entry name" value="ABC_transporter-like_ATP-bd"/>
</dbReference>
<dbReference type="InterPro" id="IPR017871">
    <property type="entry name" value="ABC_transporter-like_CS"/>
</dbReference>
<dbReference type="InterPro" id="IPR027417">
    <property type="entry name" value="P-loop_NTPase"/>
</dbReference>
<dbReference type="InterPro" id="IPR005666">
    <property type="entry name" value="Sulph_transpt1"/>
</dbReference>
<dbReference type="InterPro" id="IPR024765">
    <property type="entry name" value="TOBE-like"/>
</dbReference>
<dbReference type="NCBIfam" id="TIGR00968">
    <property type="entry name" value="3a0106s01"/>
    <property type="match status" value="1"/>
</dbReference>
<dbReference type="PANTHER" id="PTHR42781">
    <property type="entry name" value="SPERMIDINE/PUTRESCINE IMPORT ATP-BINDING PROTEIN POTA"/>
    <property type="match status" value="1"/>
</dbReference>
<dbReference type="PANTHER" id="PTHR42781:SF4">
    <property type="entry name" value="SPERMIDINE_PUTRESCINE IMPORT ATP-BINDING PROTEIN POTA"/>
    <property type="match status" value="1"/>
</dbReference>
<dbReference type="Pfam" id="PF00005">
    <property type="entry name" value="ABC_tran"/>
    <property type="match status" value="1"/>
</dbReference>
<dbReference type="Pfam" id="PF12857">
    <property type="entry name" value="TOBE_3"/>
    <property type="match status" value="1"/>
</dbReference>
<dbReference type="SMART" id="SM00382">
    <property type="entry name" value="AAA"/>
    <property type="match status" value="1"/>
</dbReference>
<dbReference type="SUPFAM" id="SSF52540">
    <property type="entry name" value="P-loop containing nucleoside triphosphate hydrolases"/>
    <property type="match status" value="1"/>
</dbReference>
<dbReference type="PROSITE" id="PS00211">
    <property type="entry name" value="ABC_TRANSPORTER_1"/>
    <property type="match status" value="1"/>
</dbReference>
<dbReference type="PROSITE" id="PS50893">
    <property type="entry name" value="ABC_TRANSPORTER_2"/>
    <property type="match status" value="1"/>
</dbReference>
<dbReference type="PROSITE" id="PS51237">
    <property type="entry name" value="CYSA"/>
    <property type="match status" value="1"/>
</dbReference>
<comment type="function">
    <text evidence="1">Part of the ABC transporter complex CysAWTP involved in sulfate/thiosulfate import. Responsible for energy coupling to the transport system.</text>
</comment>
<comment type="catalytic activity">
    <reaction evidence="1">
        <text>sulfate(out) + ATP + H2O = sulfate(in) + ADP + phosphate + H(+)</text>
        <dbReference type="Rhea" id="RHEA:10192"/>
        <dbReference type="ChEBI" id="CHEBI:15377"/>
        <dbReference type="ChEBI" id="CHEBI:15378"/>
        <dbReference type="ChEBI" id="CHEBI:16189"/>
        <dbReference type="ChEBI" id="CHEBI:30616"/>
        <dbReference type="ChEBI" id="CHEBI:43474"/>
        <dbReference type="ChEBI" id="CHEBI:456216"/>
        <dbReference type="EC" id="7.3.2.3"/>
    </reaction>
</comment>
<comment type="catalytic activity">
    <reaction evidence="1">
        <text>thiosulfate(out) + ATP + H2O = thiosulfate(in) + ADP + phosphate + H(+)</text>
        <dbReference type="Rhea" id="RHEA:29871"/>
        <dbReference type="ChEBI" id="CHEBI:15377"/>
        <dbReference type="ChEBI" id="CHEBI:15378"/>
        <dbReference type="ChEBI" id="CHEBI:30616"/>
        <dbReference type="ChEBI" id="CHEBI:33542"/>
        <dbReference type="ChEBI" id="CHEBI:43474"/>
        <dbReference type="ChEBI" id="CHEBI:456216"/>
        <dbReference type="EC" id="7.3.2.3"/>
    </reaction>
</comment>
<comment type="subunit">
    <text evidence="1">The complex is composed of two ATP-binding proteins (CysA), two transmembrane proteins (CysT and CysW) and a solute-binding protein (CysP).</text>
</comment>
<comment type="subcellular location">
    <subcellularLocation>
        <location evidence="1">Cell inner membrane</location>
        <topology evidence="1">Peripheral membrane protein</topology>
    </subcellularLocation>
</comment>
<comment type="similarity">
    <text evidence="1">Belongs to the ABC transporter superfamily. Sulfate/tungstate importer (TC 3.A.1.6) family.</text>
</comment>
<organism>
    <name type="scientific">Rhizobium meliloti (strain 1021)</name>
    <name type="common">Ensifer meliloti</name>
    <name type="synonym">Sinorhizobium meliloti</name>
    <dbReference type="NCBI Taxonomy" id="266834"/>
    <lineage>
        <taxon>Bacteria</taxon>
        <taxon>Pseudomonadati</taxon>
        <taxon>Pseudomonadota</taxon>
        <taxon>Alphaproteobacteria</taxon>
        <taxon>Hyphomicrobiales</taxon>
        <taxon>Rhizobiaceae</taxon>
        <taxon>Sinorhizobium/Ensifer group</taxon>
        <taxon>Sinorhizobium</taxon>
    </lineage>
</organism>